<organism>
    <name type="scientific">Mycobacterium leprae (strain Br4923)</name>
    <dbReference type="NCBI Taxonomy" id="561304"/>
    <lineage>
        <taxon>Bacteria</taxon>
        <taxon>Bacillati</taxon>
        <taxon>Actinomycetota</taxon>
        <taxon>Actinomycetes</taxon>
        <taxon>Mycobacteriales</taxon>
        <taxon>Mycobacteriaceae</taxon>
        <taxon>Mycobacterium</taxon>
    </lineage>
</organism>
<comment type="function">
    <text evidence="1">Catalyzes the deacetylation of 1D-myo-inositol 2-acetamido-2-deoxy-alpha-D-glucopyranoside (GlcNAc-Ins) in the mycothiol biosynthesis pathway.</text>
</comment>
<comment type="catalytic activity">
    <reaction evidence="1">
        <text>1D-myo-inositol 2-acetamido-2-deoxy-alpha-D-glucopyranoside + H2O = 1D-myo-inositol 2-amino-2-deoxy-alpha-D-glucopyranoside + acetate</text>
        <dbReference type="Rhea" id="RHEA:26180"/>
        <dbReference type="ChEBI" id="CHEBI:15377"/>
        <dbReference type="ChEBI" id="CHEBI:30089"/>
        <dbReference type="ChEBI" id="CHEBI:52442"/>
        <dbReference type="ChEBI" id="CHEBI:58886"/>
        <dbReference type="EC" id="3.5.1.103"/>
    </reaction>
</comment>
<comment type="cofactor">
    <cofactor evidence="1">
        <name>Zn(2+)</name>
        <dbReference type="ChEBI" id="CHEBI:29105"/>
    </cofactor>
    <text evidence="1">Binds 1 zinc ion per subunit.</text>
</comment>
<comment type="similarity">
    <text evidence="1">Belongs to the MshB deacetylase family.</text>
</comment>
<keyword id="KW-0378">Hydrolase</keyword>
<keyword id="KW-0479">Metal-binding</keyword>
<keyword id="KW-0862">Zinc</keyword>
<protein>
    <recommendedName>
        <fullName evidence="1">1D-myo-inositol 2-acetamido-2-deoxy-alpha-D-glucopyranoside deacetylase</fullName>
        <shortName evidence="1">GlcNAc-Ins deacetylase</shortName>
        <ecNumber evidence="1">3.5.1.103</ecNumber>
    </recommendedName>
    <alternativeName>
        <fullName>N-acetyl-1-D-myo-inositol 2-amino-2-deoxy-alpha-D-glucopyranoside deacetylase</fullName>
    </alternativeName>
</protein>
<name>MSHB_MYCLB</name>
<reference key="1">
    <citation type="journal article" date="2009" name="Nat. Genet.">
        <title>Comparative genomic and phylogeographic analysis of Mycobacterium leprae.</title>
        <authorList>
            <person name="Monot M."/>
            <person name="Honore N."/>
            <person name="Garnier T."/>
            <person name="Zidane N."/>
            <person name="Sherafi D."/>
            <person name="Paniz-Mondolfi A."/>
            <person name="Matsuoka M."/>
            <person name="Taylor G.M."/>
            <person name="Donoghue H.D."/>
            <person name="Bouwman A."/>
            <person name="Mays S."/>
            <person name="Watson C."/>
            <person name="Lockwood D."/>
            <person name="Khamispour A."/>
            <person name="Dowlati Y."/>
            <person name="Jianping S."/>
            <person name="Rea T.H."/>
            <person name="Vera-Cabrera L."/>
            <person name="Stefani M.M."/>
            <person name="Banu S."/>
            <person name="Macdonald M."/>
            <person name="Sapkota B.R."/>
            <person name="Spencer J.S."/>
            <person name="Thomas J."/>
            <person name="Harshman K."/>
            <person name="Singh P."/>
            <person name="Busso P."/>
            <person name="Gattiker A."/>
            <person name="Rougemont J."/>
            <person name="Brennan P.J."/>
            <person name="Cole S.T."/>
        </authorList>
    </citation>
    <scope>NUCLEOTIDE SEQUENCE [LARGE SCALE GENOMIC DNA]</scope>
    <source>
        <strain>Br4923</strain>
    </source>
</reference>
<feature type="chain" id="PRO_0000400199" description="1D-myo-inositol 2-acetamido-2-deoxy-alpha-D-glucopyranoside deacetylase">
    <location>
        <begin position="1"/>
        <end position="308"/>
    </location>
</feature>
<feature type="binding site" evidence="1">
    <location>
        <position position="13"/>
    </location>
    <ligand>
        <name>Zn(2+)</name>
        <dbReference type="ChEBI" id="CHEBI:29105"/>
    </ligand>
</feature>
<feature type="binding site" evidence="1">
    <location>
        <position position="16"/>
    </location>
    <ligand>
        <name>Zn(2+)</name>
        <dbReference type="ChEBI" id="CHEBI:29105"/>
    </ligand>
</feature>
<feature type="binding site" evidence="1">
    <location>
        <position position="147"/>
    </location>
    <ligand>
        <name>Zn(2+)</name>
        <dbReference type="ChEBI" id="CHEBI:29105"/>
    </ligand>
</feature>
<dbReference type="EC" id="3.5.1.103" evidence="1"/>
<dbReference type="EMBL" id="FM211192">
    <property type="protein sequence ID" value="CAR71589.1"/>
    <property type="molecule type" value="Genomic_DNA"/>
</dbReference>
<dbReference type="SMR" id="B8ZRQ3"/>
<dbReference type="KEGG" id="mlb:MLBr01495"/>
<dbReference type="HOGENOM" id="CLU_049311_2_1_11"/>
<dbReference type="Proteomes" id="UP000006900">
    <property type="component" value="Chromosome"/>
</dbReference>
<dbReference type="GO" id="GO:0035595">
    <property type="term" value="F:N-acetylglucosaminylinositol deacetylase activity"/>
    <property type="evidence" value="ECO:0007669"/>
    <property type="project" value="UniProtKB-EC"/>
</dbReference>
<dbReference type="GO" id="GO:0008270">
    <property type="term" value="F:zinc ion binding"/>
    <property type="evidence" value="ECO:0007669"/>
    <property type="project" value="UniProtKB-UniRule"/>
</dbReference>
<dbReference type="GO" id="GO:0010125">
    <property type="term" value="P:mycothiol biosynthetic process"/>
    <property type="evidence" value="ECO:0007669"/>
    <property type="project" value="UniProtKB-UniRule"/>
</dbReference>
<dbReference type="Gene3D" id="3.40.50.10320">
    <property type="entry name" value="LmbE-like"/>
    <property type="match status" value="1"/>
</dbReference>
<dbReference type="HAMAP" id="MF_01696">
    <property type="entry name" value="MshB"/>
    <property type="match status" value="1"/>
</dbReference>
<dbReference type="InterPro" id="IPR003737">
    <property type="entry name" value="GlcNAc_PI_deacetylase-related"/>
</dbReference>
<dbReference type="InterPro" id="IPR024078">
    <property type="entry name" value="LmbE-like_dom_sf"/>
</dbReference>
<dbReference type="InterPro" id="IPR017810">
    <property type="entry name" value="Mycothiol_biosynthesis_MshB"/>
</dbReference>
<dbReference type="NCBIfam" id="TIGR03445">
    <property type="entry name" value="mycothiol_MshB"/>
    <property type="match status" value="1"/>
</dbReference>
<dbReference type="PANTHER" id="PTHR12993:SF26">
    <property type="entry name" value="1D-MYO-INOSITOL 2-ACETAMIDO-2-DEOXY-ALPHA-D-GLUCOPYRANOSIDE DEACETYLASE"/>
    <property type="match status" value="1"/>
</dbReference>
<dbReference type="PANTHER" id="PTHR12993">
    <property type="entry name" value="N-ACETYLGLUCOSAMINYL-PHOSPHATIDYLINOSITOL DE-N-ACETYLASE-RELATED"/>
    <property type="match status" value="1"/>
</dbReference>
<dbReference type="Pfam" id="PF02585">
    <property type="entry name" value="PIG-L"/>
    <property type="match status" value="1"/>
</dbReference>
<dbReference type="SUPFAM" id="SSF102588">
    <property type="entry name" value="LmbE-like"/>
    <property type="match status" value="1"/>
</dbReference>
<evidence type="ECO:0000255" key="1">
    <source>
        <dbReference type="HAMAP-Rule" id="MF_01696"/>
    </source>
</evidence>
<accession>B8ZRQ3</accession>
<proteinExistence type="inferred from homology"/>
<gene>
    <name evidence="1" type="primary">mshB</name>
    <name type="ordered locus">MLBr01495</name>
</gene>
<sequence>MSETPRLLFVHAHPDDESLSNGATIAHYTSRGAQVQVVTCTLGEEGEVIGDRWAELTVDHADQLGGYRIFELTEALRALGVSAPIYLGGAGRWRDSGMRGTAPRRRQRFIDADENEAVGALVAIIRELRPHVVVTYDPHGGYGHPDHVHTHFITAAAVASSGVAAGLEVGADEYPGKPWKVPKFYWSVFALSAFEAGMNALQGKDLRPEWTIPPREEFYFGYSDKDIDAVVEATSDVWAAKTAALTAHATQVVVGPTGRACALSNNMVMPIFAQEHYVLAAGSAGNRDERGWETDLLAGLCLDGFDAR</sequence>